<keyword id="KW-1185">Reference proteome</keyword>
<keyword id="KW-0687">Ribonucleoprotein</keyword>
<keyword id="KW-0689">Ribosomal protein</keyword>
<feature type="chain" id="PRO_0000296475" description="Large ribosomal subunit protein bL32">
    <location>
        <begin position="1"/>
        <end position="59"/>
    </location>
</feature>
<feature type="region of interest" description="Disordered" evidence="2">
    <location>
        <begin position="1"/>
        <end position="59"/>
    </location>
</feature>
<feature type="compositionally biased region" description="Basic residues" evidence="2">
    <location>
        <begin position="7"/>
        <end position="16"/>
    </location>
</feature>
<evidence type="ECO:0000255" key="1">
    <source>
        <dbReference type="HAMAP-Rule" id="MF_00340"/>
    </source>
</evidence>
<evidence type="ECO:0000256" key="2">
    <source>
        <dbReference type="SAM" id="MobiDB-lite"/>
    </source>
</evidence>
<evidence type="ECO:0000305" key="3"/>
<name>RL32_HAHCH</name>
<reference key="1">
    <citation type="journal article" date="2005" name="Nucleic Acids Res.">
        <title>Genomic blueprint of Hahella chejuensis, a marine microbe producing an algicidal agent.</title>
        <authorList>
            <person name="Jeong H."/>
            <person name="Yim J.H."/>
            <person name="Lee C."/>
            <person name="Choi S.-H."/>
            <person name="Park Y.K."/>
            <person name="Yoon S.H."/>
            <person name="Hur C.-G."/>
            <person name="Kang H.-Y."/>
            <person name="Kim D."/>
            <person name="Lee H.H."/>
            <person name="Park K.H."/>
            <person name="Park S.-H."/>
            <person name="Park H.-S."/>
            <person name="Lee H.K."/>
            <person name="Oh T.K."/>
            <person name="Kim J.F."/>
        </authorList>
    </citation>
    <scope>NUCLEOTIDE SEQUENCE [LARGE SCALE GENOMIC DNA]</scope>
    <source>
        <strain>KCTC 2396</strain>
    </source>
</reference>
<protein>
    <recommendedName>
        <fullName evidence="1">Large ribosomal subunit protein bL32</fullName>
    </recommendedName>
    <alternativeName>
        <fullName evidence="3">50S ribosomal protein L32</fullName>
    </alternativeName>
</protein>
<sequence length="59" mass="6730">MAVQQNRKSRSRRGMRRSHDALSSAALSIDPTTGEKHRRHHVTPDGFYRGKKVVEVSQD</sequence>
<organism>
    <name type="scientific">Hahella chejuensis (strain KCTC 2396)</name>
    <dbReference type="NCBI Taxonomy" id="349521"/>
    <lineage>
        <taxon>Bacteria</taxon>
        <taxon>Pseudomonadati</taxon>
        <taxon>Pseudomonadota</taxon>
        <taxon>Gammaproteobacteria</taxon>
        <taxon>Oceanospirillales</taxon>
        <taxon>Hahellaceae</taxon>
        <taxon>Hahella</taxon>
    </lineage>
</organism>
<comment type="similarity">
    <text evidence="1">Belongs to the bacterial ribosomal protein bL32 family.</text>
</comment>
<accession>Q2SK53</accession>
<proteinExistence type="inferred from homology"/>
<dbReference type="EMBL" id="CP000155">
    <property type="protein sequence ID" value="ABC28971.1"/>
    <property type="molecule type" value="Genomic_DNA"/>
</dbReference>
<dbReference type="RefSeq" id="WP_011396041.1">
    <property type="nucleotide sequence ID" value="NC_007645.1"/>
</dbReference>
<dbReference type="SMR" id="Q2SK53"/>
<dbReference type="STRING" id="349521.HCH_10002"/>
<dbReference type="KEGG" id="hch:HCH_10002"/>
<dbReference type="eggNOG" id="COG0333">
    <property type="taxonomic scope" value="Bacteria"/>
</dbReference>
<dbReference type="HOGENOM" id="CLU_129084_2_1_6"/>
<dbReference type="OrthoDB" id="9801927at2"/>
<dbReference type="Proteomes" id="UP000000238">
    <property type="component" value="Chromosome"/>
</dbReference>
<dbReference type="GO" id="GO:0015934">
    <property type="term" value="C:large ribosomal subunit"/>
    <property type="evidence" value="ECO:0007669"/>
    <property type="project" value="InterPro"/>
</dbReference>
<dbReference type="GO" id="GO:0003735">
    <property type="term" value="F:structural constituent of ribosome"/>
    <property type="evidence" value="ECO:0007669"/>
    <property type="project" value="InterPro"/>
</dbReference>
<dbReference type="GO" id="GO:0006412">
    <property type="term" value="P:translation"/>
    <property type="evidence" value="ECO:0007669"/>
    <property type="project" value="UniProtKB-UniRule"/>
</dbReference>
<dbReference type="HAMAP" id="MF_00340">
    <property type="entry name" value="Ribosomal_bL32"/>
    <property type="match status" value="1"/>
</dbReference>
<dbReference type="InterPro" id="IPR002677">
    <property type="entry name" value="Ribosomal_bL32"/>
</dbReference>
<dbReference type="InterPro" id="IPR044957">
    <property type="entry name" value="Ribosomal_bL32_bact"/>
</dbReference>
<dbReference type="InterPro" id="IPR011332">
    <property type="entry name" value="Ribosomal_zn-bd"/>
</dbReference>
<dbReference type="NCBIfam" id="TIGR01031">
    <property type="entry name" value="rpmF_bact"/>
    <property type="match status" value="1"/>
</dbReference>
<dbReference type="PANTHER" id="PTHR35534">
    <property type="entry name" value="50S RIBOSOMAL PROTEIN L32"/>
    <property type="match status" value="1"/>
</dbReference>
<dbReference type="PANTHER" id="PTHR35534:SF1">
    <property type="entry name" value="LARGE RIBOSOMAL SUBUNIT PROTEIN BL32"/>
    <property type="match status" value="1"/>
</dbReference>
<dbReference type="Pfam" id="PF01783">
    <property type="entry name" value="Ribosomal_L32p"/>
    <property type="match status" value="1"/>
</dbReference>
<dbReference type="SUPFAM" id="SSF57829">
    <property type="entry name" value="Zn-binding ribosomal proteins"/>
    <property type="match status" value="1"/>
</dbReference>
<gene>
    <name evidence="1" type="primary">rpmF</name>
    <name type="ordered locus">HCH_10002</name>
</gene>